<comment type="function">
    <text evidence="1">Component of the A-type ATP synthase that produces ATP from ADP in the presence of a proton gradient across the membrane.</text>
</comment>
<comment type="subunit">
    <text evidence="1">Has multiple subunits with at least A(3), B(3), C, D, E, F, H, I and proteolipid K(x).</text>
</comment>
<comment type="subcellular location">
    <subcellularLocation>
        <location evidence="1">Cell membrane</location>
        <topology evidence="1">Peripheral membrane protein</topology>
    </subcellularLocation>
</comment>
<comment type="similarity">
    <text evidence="1">Belongs to the V-ATPase V0D/AC39 subunit family.</text>
</comment>
<keyword id="KW-0066">ATP synthesis</keyword>
<keyword id="KW-1003">Cell membrane</keyword>
<keyword id="KW-0375">Hydrogen ion transport</keyword>
<keyword id="KW-0406">Ion transport</keyword>
<keyword id="KW-0472">Membrane</keyword>
<keyword id="KW-1185">Reference proteome</keyword>
<keyword id="KW-0813">Transport</keyword>
<gene>
    <name evidence="1" type="primary">atpC</name>
    <name type="ordered locus">MA_4156</name>
</gene>
<reference key="1">
    <citation type="journal article" date="2002" name="Genome Res.">
        <title>The genome of Methanosarcina acetivorans reveals extensive metabolic and physiological diversity.</title>
        <authorList>
            <person name="Galagan J.E."/>
            <person name="Nusbaum C."/>
            <person name="Roy A."/>
            <person name="Endrizzi M.G."/>
            <person name="Macdonald P."/>
            <person name="FitzHugh W."/>
            <person name="Calvo S."/>
            <person name="Engels R."/>
            <person name="Smirnov S."/>
            <person name="Atnoor D."/>
            <person name="Brown A."/>
            <person name="Allen N."/>
            <person name="Naylor J."/>
            <person name="Stange-Thomann N."/>
            <person name="DeArellano K."/>
            <person name="Johnson R."/>
            <person name="Linton L."/>
            <person name="McEwan P."/>
            <person name="McKernan K."/>
            <person name="Talamas J."/>
            <person name="Tirrell A."/>
            <person name="Ye W."/>
            <person name="Zimmer A."/>
            <person name="Barber R.D."/>
            <person name="Cann I."/>
            <person name="Graham D.E."/>
            <person name="Grahame D.A."/>
            <person name="Guss A.M."/>
            <person name="Hedderich R."/>
            <person name="Ingram-Smith C."/>
            <person name="Kuettner H.C."/>
            <person name="Krzycki J.A."/>
            <person name="Leigh J.A."/>
            <person name="Li W."/>
            <person name="Liu J."/>
            <person name="Mukhopadhyay B."/>
            <person name="Reeve J.N."/>
            <person name="Smith K."/>
            <person name="Springer T.A."/>
            <person name="Umayam L.A."/>
            <person name="White O."/>
            <person name="White R.H."/>
            <person name="de Macario E.C."/>
            <person name="Ferry J.G."/>
            <person name="Jarrell K.F."/>
            <person name="Jing H."/>
            <person name="Macario A.J.L."/>
            <person name="Paulsen I.T."/>
            <person name="Pritchett M."/>
            <person name="Sowers K.R."/>
            <person name="Swanson R.V."/>
            <person name="Zinder S.H."/>
            <person name="Lander E."/>
            <person name="Metcalf W.W."/>
            <person name="Birren B."/>
        </authorList>
    </citation>
    <scope>NUCLEOTIDE SEQUENCE [LARGE SCALE GENOMIC DNA]</scope>
    <source>
        <strain>ATCC 35395 / DSM 2834 / JCM 12185 / C2A</strain>
    </source>
</reference>
<name>AATC_METAC</name>
<protein>
    <recommendedName>
        <fullName evidence="1">A-type ATP synthase subunit C</fullName>
    </recommendedName>
</protein>
<accession>Q8TIJ3</accession>
<dbReference type="EMBL" id="AE010299">
    <property type="protein sequence ID" value="AAM07504.1"/>
    <property type="molecule type" value="Genomic_DNA"/>
</dbReference>
<dbReference type="RefSeq" id="WP_011024044.1">
    <property type="nucleotide sequence ID" value="NC_003552.1"/>
</dbReference>
<dbReference type="SMR" id="Q8TIJ3"/>
<dbReference type="FunCoup" id="Q8TIJ3">
    <property type="interactions" value="1"/>
</dbReference>
<dbReference type="STRING" id="188937.MA_4156"/>
<dbReference type="EnsemblBacteria" id="AAM07504">
    <property type="protein sequence ID" value="AAM07504"/>
    <property type="gene ID" value="MA_4156"/>
</dbReference>
<dbReference type="GeneID" id="1476050"/>
<dbReference type="KEGG" id="mac:MA_4156"/>
<dbReference type="HOGENOM" id="CLU_059311_0_1_2"/>
<dbReference type="InParanoid" id="Q8TIJ3"/>
<dbReference type="OrthoDB" id="4272at2157"/>
<dbReference type="PhylomeDB" id="Q8TIJ3"/>
<dbReference type="Proteomes" id="UP000002487">
    <property type="component" value="Chromosome"/>
</dbReference>
<dbReference type="GO" id="GO:0005886">
    <property type="term" value="C:plasma membrane"/>
    <property type="evidence" value="ECO:0007669"/>
    <property type="project" value="UniProtKB-SubCell"/>
</dbReference>
<dbReference type="GO" id="GO:0033179">
    <property type="term" value="C:proton-transporting V-type ATPase, V0 domain"/>
    <property type="evidence" value="ECO:0007669"/>
    <property type="project" value="InterPro"/>
</dbReference>
<dbReference type="GO" id="GO:0005524">
    <property type="term" value="F:ATP binding"/>
    <property type="evidence" value="ECO:0007669"/>
    <property type="project" value="UniProtKB-UniRule"/>
</dbReference>
<dbReference type="GO" id="GO:0046933">
    <property type="term" value="F:proton-transporting ATP synthase activity, rotational mechanism"/>
    <property type="evidence" value="ECO:0007669"/>
    <property type="project" value="UniProtKB-UniRule"/>
</dbReference>
<dbReference type="GO" id="GO:0046961">
    <property type="term" value="F:proton-transporting ATPase activity, rotational mechanism"/>
    <property type="evidence" value="ECO:0007669"/>
    <property type="project" value="InterPro"/>
</dbReference>
<dbReference type="GO" id="GO:0042777">
    <property type="term" value="P:proton motive force-driven plasma membrane ATP synthesis"/>
    <property type="evidence" value="ECO:0007669"/>
    <property type="project" value="UniProtKB-UniRule"/>
</dbReference>
<dbReference type="Gene3D" id="1.10.132.50">
    <property type="entry name" value="ATP synthase (C/AC39) subunit, domain 3"/>
    <property type="match status" value="1"/>
</dbReference>
<dbReference type="Gene3D" id="1.20.1690.10">
    <property type="entry name" value="V-type ATP synthase subunit C domain"/>
    <property type="match status" value="2"/>
</dbReference>
<dbReference type="HAMAP" id="MF_00314">
    <property type="entry name" value="ATP_synth_C_arch"/>
    <property type="match status" value="1"/>
</dbReference>
<dbReference type="InterPro" id="IPR036079">
    <property type="entry name" value="ATPase_csu/dsu_sf"/>
</dbReference>
<dbReference type="InterPro" id="IPR014272">
    <property type="entry name" value="ATPase_V0-cplx_csu"/>
</dbReference>
<dbReference type="InterPro" id="IPR002843">
    <property type="entry name" value="ATPase_V0-cplx_csu/dsu"/>
</dbReference>
<dbReference type="InterPro" id="IPR050873">
    <property type="entry name" value="V-ATPase_V0D/AC39_subunit"/>
</dbReference>
<dbReference type="InterPro" id="IPR035067">
    <property type="entry name" value="V-type_ATPase_csu/dsu"/>
</dbReference>
<dbReference type="InterPro" id="IPR044911">
    <property type="entry name" value="V-type_ATPase_csu/dsu_dom_3"/>
</dbReference>
<dbReference type="NCBIfam" id="TIGR02923">
    <property type="entry name" value="AhaC"/>
    <property type="match status" value="1"/>
</dbReference>
<dbReference type="NCBIfam" id="NF002268">
    <property type="entry name" value="PRK01198.1-4"/>
    <property type="match status" value="1"/>
</dbReference>
<dbReference type="PANTHER" id="PTHR38682">
    <property type="entry name" value="V-TYPE ATP SYNTHASE SUBUNIT C"/>
    <property type="match status" value="1"/>
</dbReference>
<dbReference type="PANTHER" id="PTHR38682:SF1">
    <property type="entry name" value="V-TYPE ATP SYNTHASE SUBUNIT C"/>
    <property type="match status" value="1"/>
</dbReference>
<dbReference type="Pfam" id="PF01992">
    <property type="entry name" value="vATP-synt_AC39"/>
    <property type="match status" value="1"/>
</dbReference>
<dbReference type="SUPFAM" id="SSF103486">
    <property type="entry name" value="V-type ATP synthase subunit C"/>
    <property type="match status" value="1"/>
</dbReference>
<evidence type="ECO:0000255" key="1">
    <source>
        <dbReference type="HAMAP-Rule" id="MF_00314"/>
    </source>
</evidence>
<evidence type="ECO:0000256" key="2">
    <source>
        <dbReference type="SAM" id="MobiDB-lite"/>
    </source>
</evidence>
<proteinExistence type="inferred from homology"/>
<feature type="chain" id="PRO_0000119365" description="A-type ATP synthase subunit C">
    <location>
        <begin position="1"/>
        <end position="360"/>
    </location>
</feature>
<feature type="region of interest" description="Disordered" evidence="2">
    <location>
        <begin position="1"/>
        <end position="23"/>
    </location>
</feature>
<feature type="compositionally biased region" description="Basic residues" evidence="2">
    <location>
        <begin position="9"/>
        <end position="22"/>
    </location>
</feature>
<organism>
    <name type="scientific">Methanosarcina acetivorans (strain ATCC 35395 / DSM 2834 / JCM 12185 / C2A)</name>
    <dbReference type="NCBI Taxonomy" id="188937"/>
    <lineage>
        <taxon>Archaea</taxon>
        <taxon>Methanobacteriati</taxon>
        <taxon>Methanobacteriota</taxon>
        <taxon>Stenosarchaea group</taxon>
        <taxon>Methanomicrobia</taxon>
        <taxon>Methanosarcinales</taxon>
        <taxon>Methanosarcinaceae</taxon>
        <taxon>Methanosarcina</taxon>
    </lineage>
</organism>
<sequence>MRLLERLWGKKPSRKSDKKKKGTSNYAYAVTRVRAMKSKLLPKETYPRLLNMGIDEITRFIQESEYKNDVDELAMKYSGGDLAEHALNRNLALTYDKLLRITSGELNYLIAAYLLRYDIWNVKTLLRGKLYNASVEDILESLISAGEFTYTFLSELAAKATYQEIIDALKETDYYPLLQEFDGNNLAYIENELDKMYYSSLFAAIGKPRSKDRKLFARFIKLEVDVKNLGTLFRLKKAGVEKSDEIMPLMIEGGLELKPEKLATLPYEQFIDELRKTQYWDAIATVTGLETASLTIVESRLIRYYLESATTYSHVSPISIVPIMEYIIHKNNEVNNLRIIFRGKEADLSDTLIKDQLVVI</sequence>